<reference key="1">
    <citation type="journal article" date="1995" name="J. Bacteriol.">
        <title>Cloning and characterization of the glucokinase gene of Brucella abortus 19 and identification of three other genes.</title>
        <authorList>
            <person name="Essenberg R.C."/>
        </authorList>
    </citation>
    <scope>NUCLEOTIDE SEQUENCE [GENOMIC DNA]</scope>
</reference>
<reference key="2">
    <citation type="journal article" date="2008" name="PLoS ONE">
        <title>Genome sequence of Brucella abortus vaccine strain S19 compared to virulent strains yields candidate virulence genes.</title>
        <authorList>
            <person name="Crasta O.R."/>
            <person name="Folkerts O."/>
            <person name="Fei Z."/>
            <person name="Mane S.P."/>
            <person name="Evans C."/>
            <person name="Martino-Catt S."/>
            <person name="Bricker B."/>
            <person name="Yu G."/>
            <person name="Du L."/>
            <person name="Sobral B.W."/>
        </authorList>
    </citation>
    <scope>NUCLEOTIDE SEQUENCE [LARGE SCALE GENOMIC DNA]</scope>
    <source>
        <strain>S19</strain>
    </source>
</reference>
<protein>
    <recommendedName>
        <fullName evidence="1">Methylglyoxal synthase</fullName>
        <shortName evidence="1">MGS</shortName>
        <ecNumber evidence="1">4.2.3.3</ecNumber>
    </recommendedName>
</protein>
<organism>
    <name type="scientific">Brucella abortus (strain S19)</name>
    <dbReference type="NCBI Taxonomy" id="430066"/>
    <lineage>
        <taxon>Bacteria</taxon>
        <taxon>Pseudomonadati</taxon>
        <taxon>Pseudomonadota</taxon>
        <taxon>Alphaproteobacteria</taxon>
        <taxon>Hyphomicrobiales</taxon>
        <taxon>Brucellaceae</taxon>
        <taxon>Brucella/Ochrobactrum group</taxon>
        <taxon>Brucella</taxon>
    </lineage>
</organism>
<keyword id="KW-0456">Lyase</keyword>
<proteinExistence type="inferred from homology"/>
<gene>
    <name evidence="1" type="primary">mgsA</name>
    <name type="ordered locus">BAbS19_II09350</name>
</gene>
<comment type="function">
    <text evidence="1">Catalyzes the formation of methylglyoxal from dihydroxyacetone phosphate.</text>
</comment>
<comment type="catalytic activity">
    <reaction evidence="1">
        <text>dihydroxyacetone phosphate = methylglyoxal + phosphate</text>
        <dbReference type="Rhea" id="RHEA:17937"/>
        <dbReference type="ChEBI" id="CHEBI:17158"/>
        <dbReference type="ChEBI" id="CHEBI:43474"/>
        <dbReference type="ChEBI" id="CHEBI:57642"/>
        <dbReference type="EC" id="4.2.3.3"/>
    </reaction>
</comment>
<comment type="similarity">
    <text evidence="1">Belongs to the methylglyoxal synthase family.</text>
</comment>
<name>MGSA_BRUA1</name>
<feature type="chain" id="PRO_1000128979" description="Methylglyoxal synthase">
    <location>
        <begin position="1"/>
        <end position="125"/>
    </location>
</feature>
<feature type="domain" description="MGS-like" evidence="1">
    <location>
        <begin position="1"/>
        <end position="125"/>
    </location>
</feature>
<feature type="active site" description="Proton donor/acceptor" evidence="1">
    <location>
        <position position="65"/>
    </location>
</feature>
<feature type="binding site" evidence="1">
    <location>
        <position position="12"/>
    </location>
    <ligand>
        <name>substrate</name>
    </ligand>
</feature>
<feature type="binding site" evidence="1">
    <location>
        <position position="16"/>
    </location>
    <ligand>
        <name>substrate</name>
    </ligand>
</feature>
<feature type="binding site" evidence="1">
    <location>
        <begin position="38"/>
        <end position="41"/>
    </location>
    <ligand>
        <name>substrate</name>
    </ligand>
</feature>
<feature type="binding site" evidence="1">
    <location>
        <begin position="59"/>
        <end position="60"/>
    </location>
    <ligand>
        <name>substrate</name>
    </ligand>
</feature>
<feature type="binding site" evidence="1">
    <location>
        <position position="92"/>
    </location>
    <ligand>
        <name>substrate</name>
    </ligand>
</feature>
<sequence length="125" mass="13546">MTQRLRIALIAHDQKKDDMVAFARAHEQALSRYDIVATGTTGGLIQDACPSLNIHRVKSGPLGGDQQIGAMIAEGTVEVLIFFIDPLSPLPHDVDVKALTRLGSVYDIPMALNRATAEKLVRALD</sequence>
<dbReference type="EC" id="4.2.3.3" evidence="1"/>
<dbReference type="EMBL" id="U21919">
    <property type="protein sequence ID" value="AAC43671.1"/>
    <property type="molecule type" value="Genomic_DNA"/>
</dbReference>
<dbReference type="EMBL" id="CP000888">
    <property type="protein sequence ID" value="ACD74420.1"/>
    <property type="molecule type" value="Genomic_DNA"/>
</dbReference>
<dbReference type="RefSeq" id="WP_002965604.1">
    <property type="nucleotide sequence ID" value="NC_010740.1"/>
</dbReference>
<dbReference type="SMR" id="B2SC33"/>
<dbReference type="KEGG" id="bmc:BAbS19_II09350"/>
<dbReference type="HOGENOM" id="CLU_120420_1_0_5"/>
<dbReference type="Proteomes" id="UP000002565">
    <property type="component" value="Chromosome 2"/>
</dbReference>
<dbReference type="GO" id="GO:0005829">
    <property type="term" value="C:cytosol"/>
    <property type="evidence" value="ECO:0007669"/>
    <property type="project" value="TreeGrafter"/>
</dbReference>
<dbReference type="GO" id="GO:0008929">
    <property type="term" value="F:methylglyoxal synthase activity"/>
    <property type="evidence" value="ECO:0007669"/>
    <property type="project" value="UniProtKB-UniRule"/>
</dbReference>
<dbReference type="GO" id="GO:0019242">
    <property type="term" value="P:methylglyoxal biosynthetic process"/>
    <property type="evidence" value="ECO:0007669"/>
    <property type="project" value="UniProtKB-UniRule"/>
</dbReference>
<dbReference type="CDD" id="cd01422">
    <property type="entry name" value="MGS"/>
    <property type="match status" value="1"/>
</dbReference>
<dbReference type="Gene3D" id="3.40.50.1380">
    <property type="entry name" value="Methylglyoxal synthase-like domain"/>
    <property type="match status" value="1"/>
</dbReference>
<dbReference type="HAMAP" id="MF_00549">
    <property type="entry name" value="Methylglyoxal_synth"/>
    <property type="match status" value="1"/>
</dbReference>
<dbReference type="InterPro" id="IPR004363">
    <property type="entry name" value="Methylgl_synth"/>
</dbReference>
<dbReference type="InterPro" id="IPR018148">
    <property type="entry name" value="Methylglyoxal_synth_AS"/>
</dbReference>
<dbReference type="InterPro" id="IPR011607">
    <property type="entry name" value="MGS-like_dom"/>
</dbReference>
<dbReference type="InterPro" id="IPR036914">
    <property type="entry name" value="MGS-like_dom_sf"/>
</dbReference>
<dbReference type="NCBIfam" id="TIGR00160">
    <property type="entry name" value="MGSA"/>
    <property type="match status" value="1"/>
</dbReference>
<dbReference type="NCBIfam" id="NF003559">
    <property type="entry name" value="PRK05234.1"/>
    <property type="match status" value="1"/>
</dbReference>
<dbReference type="PANTHER" id="PTHR30492">
    <property type="entry name" value="METHYLGLYOXAL SYNTHASE"/>
    <property type="match status" value="1"/>
</dbReference>
<dbReference type="PANTHER" id="PTHR30492:SF0">
    <property type="entry name" value="METHYLGLYOXAL SYNTHASE"/>
    <property type="match status" value="1"/>
</dbReference>
<dbReference type="Pfam" id="PF02142">
    <property type="entry name" value="MGS"/>
    <property type="match status" value="1"/>
</dbReference>
<dbReference type="PIRSF" id="PIRSF006614">
    <property type="entry name" value="Methylglyox_syn"/>
    <property type="match status" value="1"/>
</dbReference>
<dbReference type="SMART" id="SM00851">
    <property type="entry name" value="MGS"/>
    <property type="match status" value="1"/>
</dbReference>
<dbReference type="SUPFAM" id="SSF52335">
    <property type="entry name" value="Methylglyoxal synthase-like"/>
    <property type="match status" value="1"/>
</dbReference>
<dbReference type="PROSITE" id="PS01335">
    <property type="entry name" value="METHYLGLYOXAL_SYNTH"/>
    <property type="match status" value="1"/>
</dbReference>
<dbReference type="PROSITE" id="PS51855">
    <property type="entry name" value="MGS"/>
    <property type="match status" value="1"/>
</dbReference>
<accession>B2SC33</accession>
<accession>P0A3Q4</accession>
<accession>Q44615</accession>
<accession>Q576R7</accession>
<evidence type="ECO:0000255" key="1">
    <source>
        <dbReference type="HAMAP-Rule" id="MF_00549"/>
    </source>
</evidence>